<protein>
    <recommendedName>
        <fullName evidence="1">Ferredoxin--NADP reductase</fullName>
        <shortName evidence="1">FNR</shortName>
        <shortName evidence="1">Fd-NADP(+) reductase</shortName>
        <ecNumber evidence="1">1.18.1.2</ecNumber>
    </recommendedName>
</protein>
<organism>
    <name type="scientific">Streptococcus pyogenes serotype M6 (strain ATCC BAA-946 / MGAS10394)</name>
    <dbReference type="NCBI Taxonomy" id="286636"/>
    <lineage>
        <taxon>Bacteria</taxon>
        <taxon>Bacillati</taxon>
        <taxon>Bacillota</taxon>
        <taxon>Bacilli</taxon>
        <taxon>Lactobacillales</taxon>
        <taxon>Streptococcaceae</taxon>
        <taxon>Streptococcus</taxon>
    </lineage>
</organism>
<name>FENR_STRP6</name>
<sequence length="330" mass="36148">MKDKAYDITIIGGGPIGLFAAFYAGLRGVTVKIIESLSELGGQPAILYPEKMIYDIPAYPSLTGVELTENLIKQLSRFEDRTTICLKEEVLTFDKVKGGFSIRTNKAEHFSKAIIIACGNGAFAPRTLGLESEENFADHNLFYNVHQLDQFAGQKVVICGGGDSAVDWALALEDIAESVTVVHRRDAFRAHEHSVELLKTSTVNLLTPYVPKALKGIGNLAEKLVIQKVKEDEVLELELDSLIVSFGFSTSNKNLKNWNLDYKRSSITVSPLFQTSQEGIFAIGDAAAYNGKVDLIATGFGEAPTAVNQAINYIYPDRDNRVVHSTSLID</sequence>
<feature type="chain" id="PRO_0000364972" description="Ferredoxin--NADP reductase">
    <location>
        <begin position="1"/>
        <end position="330"/>
    </location>
</feature>
<feature type="binding site" evidence="1">
    <location>
        <position position="35"/>
    </location>
    <ligand>
        <name>FAD</name>
        <dbReference type="ChEBI" id="CHEBI:57692"/>
    </ligand>
</feature>
<feature type="binding site" evidence="1">
    <location>
        <position position="43"/>
    </location>
    <ligand>
        <name>FAD</name>
        <dbReference type="ChEBI" id="CHEBI:57692"/>
    </ligand>
</feature>
<feature type="binding site" evidence="1">
    <location>
        <position position="48"/>
    </location>
    <ligand>
        <name>FAD</name>
        <dbReference type="ChEBI" id="CHEBI:57692"/>
    </ligand>
</feature>
<feature type="binding site" evidence="1">
    <location>
        <position position="90"/>
    </location>
    <ligand>
        <name>FAD</name>
        <dbReference type="ChEBI" id="CHEBI:57692"/>
    </ligand>
</feature>
<feature type="binding site" evidence="1">
    <location>
        <position position="123"/>
    </location>
    <ligand>
        <name>FAD</name>
        <dbReference type="ChEBI" id="CHEBI:57692"/>
    </ligand>
</feature>
<feature type="binding site" evidence="1">
    <location>
        <position position="285"/>
    </location>
    <ligand>
        <name>FAD</name>
        <dbReference type="ChEBI" id="CHEBI:57692"/>
    </ligand>
</feature>
<feature type="binding site" evidence="1">
    <location>
        <position position="326"/>
    </location>
    <ligand>
        <name>FAD</name>
        <dbReference type="ChEBI" id="CHEBI:57692"/>
    </ligand>
</feature>
<comment type="catalytic activity">
    <reaction evidence="1">
        <text>2 reduced [2Fe-2S]-[ferredoxin] + NADP(+) + H(+) = 2 oxidized [2Fe-2S]-[ferredoxin] + NADPH</text>
        <dbReference type="Rhea" id="RHEA:20125"/>
        <dbReference type="Rhea" id="RHEA-COMP:10000"/>
        <dbReference type="Rhea" id="RHEA-COMP:10001"/>
        <dbReference type="ChEBI" id="CHEBI:15378"/>
        <dbReference type="ChEBI" id="CHEBI:33737"/>
        <dbReference type="ChEBI" id="CHEBI:33738"/>
        <dbReference type="ChEBI" id="CHEBI:57783"/>
        <dbReference type="ChEBI" id="CHEBI:58349"/>
        <dbReference type="EC" id="1.18.1.2"/>
    </reaction>
</comment>
<comment type="cofactor">
    <cofactor evidence="1">
        <name>FAD</name>
        <dbReference type="ChEBI" id="CHEBI:57692"/>
    </cofactor>
    <text evidence="1">Binds 1 FAD per subunit.</text>
</comment>
<comment type="subunit">
    <text evidence="1">Homodimer.</text>
</comment>
<comment type="similarity">
    <text evidence="1">Belongs to the ferredoxin--NADP reductase type 2 family.</text>
</comment>
<proteinExistence type="inferred from homology"/>
<accession>Q5XCQ2</accession>
<keyword id="KW-0274">FAD</keyword>
<keyword id="KW-0285">Flavoprotein</keyword>
<keyword id="KW-0521">NADP</keyword>
<keyword id="KW-0560">Oxidoreductase</keyword>
<reference key="1">
    <citation type="journal article" date="2004" name="J. Infect. Dis.">
        <title>Progress toward characterization of the group A Streptococcus metagenome: complete genome sequence of a macrolide-resistant serotype M6 strain.</title>
        <authorList>
            <person name="Banks D.J."/>
            <person name="Porcella S.F."/>
            <person name="Barbian K.D."/>
            <person name="Beres S.B."/>
            <person name="Philips L.E."/>
            <person name="Voyich J.M."/>
            <person name="DeLeo F.R."/>
            <person name="Martin J.M."/>
            <person name="Somerville G.A."/>
            <person name="Musser J.M."/>
        </authorList>
    </citation>
    <scope>NUCLEOTIDE SEQUENCE [LARGE SCALE GENOMIC DNA]</scope>
    <source>
        <strain>ATCC BAA-946 / MGAS10394</strain>
    </source>
</reference>
<evidence type="ECO:0000255" key="1">
    <source>
        <dbReference type="HAMAP-Rule" id="MF_01685"/>
    </source>
</evidence>
<dbReference type="EC" id="1.18.1.2" evidence="1"/>
<dbReference type="EMBL" id="CP000003">
    <property type="protein sequence ID" value="AAT86811.1"/>
    <property type="molecule type" value="Genomic_DNA"/>
</dbReference>
<dbReference type="RefSeq" id="WP_002990220.1">
    <property type="nucleotide sequence ID" value="NC_006086.1"/>
</dbReference>
<dbReference type="SMR" id="Q5XCQ2"/>
<dbReference type="KEGG" id="spa:M6_Spy0676"/>
<dbReference type="HOGENOM" id="CLU_031864_5_5_9"/>
<dbReference type="Proteomes" id="UP000001167">
    <property type="component" value="Chromosome"/>
</dbReference>
<dbReference type="GO" id="GO:0004324">
    <property type="term" value="F:ferredoxin-NADP+ reductase activity"/>
    <property type="evidence" value="ECO:0007669"/>
    <property type="project" value="UniProtKB-UniRule"/>
</dbReference>
<dbReference type="GO" id="GO:0050660">
    <property type="term" value="F:flavin adenine dinucleotide binding"/>
    <property type="evidence" value="ECO:0007669"/>
    <property type="project" value="UniProtKB-UniRule"/>
</dbReference>
<dbReference type="GO" id="GO:0050661">
    <property type="term" value="F:NADP binding"/>
    <property type="evidence" value="ECO:0007669"/>
    <property type="project" value="UniProtKB-UniRule"/>
</dbReference>
<dbReference type="Gene3D" id="3.50.50.60">
    <property type="entry name" value="FAD/NAD(P)-binding domain"/>
    <property type="match status" value="2"/>
</dbReference>
<dbReference type="HAMAP" id="MF_01685">
    <property type="entry name" value="FENR2"/>
    <property type="match status" value="1"/>
</dbReference>
<dbReference type="InterPro" id="IPR036188">
    <property type="entry name" value="FAD/NAD-bd_sf"/>
</dbReference>
<dbReference type="InterPro" id="IPR023753">
    <property type="entry name" value="FAD/NAD-binding_dom"/>
</dbReference>
<dbReference type="InterPro" id="IPR022890">
    <property type="entry name" value="Fd--NADP_Rdtase_type_2"/>
</dbReference>
<dbReference type="InterPro" id="IPR050097">
    <property type="entry name" value="Ferredoxin-NADP_redctase_2"/>
</dbReference>
<dbReference type="PANTHER" id="PTHR48105">
    <property type="entry name" value="THIOREDOXIN REDUCTASE 1-RELATED-RELATED"/>
    <property type="match status" value="1"/>
</dbReference>
<dbReference type="Pfam" id="PF07992">
    <property type="entry name" value="Pyr_redox_2"/>
    <property type="match status" value="1"/>
</dbReference>
<dbReference type="PRINTS" id="PR00368">
    <property type="entry name" value="FADPNR"/>
</dbReference>
<dbReference type="PRINTS" id="PR00469">
    <property type="entry name" value="PNDRDTASEII"/>
</dbReference>
<dbReference type="SUPFAM" id="SSF51905">
    <property type="entry name" value="FAD/NAD(P)-binding domain"/>
    <property type="match status" value="1"/>
</dbReference>
<gene>
    <name type="ordered locus">M6_Spy0676</name>
</gene>